<keyword id="KW-1015">Disulfide bond</keyword>
<keyword id="KW-1185">Reference proteome</keyword>
<keyword id="KW-0964">Secreted</keyword>
<keyword id="KW-0732">Signal</keyword>
<organism>
    <name type="scientific">Macaca mulatta</name>
    <name type="common">Rhesus macaque</name>
    <dbReference type="NCBI Taxonomy" id="9544"/>
    <lineage>
        <taxon>Eukaryota</taxon>
        <taxon>Metazoa</taxon>
        <taxon>Chordata</taxon>
        <taxon>Craniata</taxon>
        <taxon>Vertebrata</taxon>
        <taxon>Euteleostomi</taxon>
        <taxon>Mammalia</taxon>
        <taxon>Eutheria</taxon>
        <taxon>Euarchontoglires</taxon>
        <taxon>Primates</taxon>
        <taxon>Haplorrhini</taxon>
        <taxon>Catarrhini</taxon>
        <taxon>Cercopithecidae</taxon>
        <taxon>Cercopithecinae</taxon>
        <taxon>Macaca</taxon>
    </lineage>
</organism>
<feature type="signal peptide" evidence="3">
    <location>
        <begin position="1"/>
        <end position="22"/>
    </location>
</feature>
<feature type="chain" id="PRO_0000036156" description="Secreted Ly-6/uPAR domain-containing protein 2">
    <location>
        <begin position="23"/>
        <end position="97"/>
    </location>
</feature>
<feature type="domain" description="UPAR/Ly6">
    <location>
        <begin position="23"/>
        <end position="95"/>
    </location>
</feature>
<feature type="disulfide bond" evidence="1">
    <location>
        <begin position="25"/>
        <end position="47"/>
    </location>
</feature>
<feature type="disulfide bond" evidence="1">
    <location>
        <begin position="28"/>
        <end position="34"/>
    </location>
</feature>
<feature type="disulfide bond" evidence="1">
    <location>
        <begin position="40"/>
        <end position="68"/>
    </location>
</feature>
<feature type="disulfide bond" evidence="1">
    <location>
        <begin position="72"/>
        <end position="88"/>
    </location>
</feature>
<feature type="disulfide bond" evidence="1">
    <location>
        <begin position="89"/>
        <end position="94"/>
    </location>
</feature>
<dbReference type="EMBL" id="JV045600">
    <property type="protein sequence ID" value="AFI35671.1"/>
    <property type="molecule type" value="mRNA"/>
</dbReference>
<dbReference type="RefSeq" id="NP_001253551.1">
    <property type="nucleotide sequence ID" value="NM_001266622.2"/>
</dbReference>
<dbReference type="SMR" id="P0DP61"/>
<dbReference type="FunCoup" id="P0DP61">
    <property type="interactions" value="423"/>
</dbReference>
<dbReference type="Ensembl" id="ENSMMUT00000021016.4">
    <property type="protein sequence ID" value="ENSMMUP00000019652.2"/>
    <property type="gene ID" value="ENSMMUG00000041404.2"/>
</dbReference>
<dbReference type="GeneID" id="100428508"/>
<dbReference type="KEGG" id="mcc:100428508"/>
<dbReference type="CTD" id="432355"/>
<dbReference type="VEuPathDB" id="HostDB:ENSMMUG00000041404"/>
<dbReference type="GeneTree" id="ENSGT00940000153378"/>
<dbReference type="InParanoid" id="P0DP61"/>
<dbReference type="OrthoDB" id="9532969at2759"/>
<dbReference type="Proteomes" id="UP000006718">
    <property type="component" value="Chromosome 8"/>
</dbReference>
<dbReference type="Bgee" id="ENSMMUG00000041404">
    <property type="expression patterns" value="Expressed in dorsolateral prefrontal cortex and 22 other cell types or tissues"/>
</dbReference>
<dbReference type="ExpressionAtlas" id="P0DP61">
    <property type="expression patterns" value="baseline"/>
</dbReference>
<dbReference type="GO" id="GO:0005615">
    <property type="term" value="C:extracellular space"/>
    <property type="evidence" value="ECO:0000250"/>
    <property type="project" value="UniProtKB"/>
</dbReference>
<dbReference type="GO" id="GO:0005886">
    <property type="term" value="C:plasma membrane"/>
    <property type="evidence" value="ECO:0000318"/>
    <property type="project" value="GO_Central"/>
</dbReference>
<dbReference type="GO" id="GO:0045202">
    <property type="term" value="C:synapse"/>
    <property type="evidence" value="ECO:0007669"/>
    <property type="project" value="GOC"/>
</dbReference>
<dbReference type="GO" id="GO:0033130">
    <property type="term" value="F:acetylcholine receptor binding"/>
    <property type="evidence" value="ECO:0000250"/>
    <property type="project" value="UniProtKB"/>
</dbReference>
<dbReference type="GO" id="GO:0030550">
    <property type="term" value="F:acetylcholine receptor inhibitor activity"/>
    <property type="evidence" value="ECO:0000318"/>
    <property type="project" value="GO_Central"/>
</dbReference>
<dbReference type="GO" id="GO:0030548">
    <property type="term" value="F:acetylcholine receptor regulator activity"/>
    <property type="evidence" value="ECO:0000250"/>
    <property type="project" value="UniProtKB"/>
</dbReference>
<dbReference type="GO" id="GO:0095500">
    <property type="term" value="P:acetylcholine receptor signaling pathway"/>
    <property type="evidence" value="ECO:0000250"/>
    <property type="project" value="UniProtKB"/>
</dbReference>
<dbReference type="GO" id="GO:0099601">
    <property type="term" value="P:regulation of neurotransmitter receptor activity"/>
    <property type="evidence" value="ECO:0000250"/>
    <property type="project" value="UniProtKB"/>
</dbReference>
<dbReference type="CDD" id="cd23561">
    <property type="entry name" value="TFP_LU_ECD_SLURP2"/>
    <property type="match status" value="1"/>
</dbReference>
<dbReference type="FunFam" id="2.10.60.10:FF:000026">
    <property type="entry name" value="Secreted Ly-6/uPAR domain-containing protein 2"/>
    <property type="match status" value="1"/>
</dbReference>
<dbReference type="Gene3D" id="2.10.60.10">
    <property type="entry name" value="CD59"/>
    <property type="match status" value="1"/>
</dbReference>
<dbReference type="InterPro" id="IPR051110">
    <property type="entry name" value="Ly-6/neurotoxin-like_GPI-ap"/>
</dbReference>
<dbReference type="InterPro" id="IPR016054">
    <property type="entry name" value="LY6_UPA_recep-like"/>
</dbReference>
<dbReference type="InterPro" id="IPR045860">
    <property type="entry name" value="Snake_toxin-like_sf"/>
</dbReference>
<dbReference type="PANTHER" id="PTHR16983:SF14">
    <property type="entry name" value="SECRETED LY-6_UPAR DOMAIN-CONTAINING PROTEIN 2"/>
    <property type="match status" value="1"/>
</dbReference>
<dbReference type="PANTHER" id="PTHR16983">
    <property type="entry name" value="UPAR/LY6 DOMAIN-CONTAINING PROTEIN"/>
    <property type="match status" value="1"/>
</dbReference>
<dbReference type="Pfam" id="PF00021">
    <property type="entry name" value="UPAR_LY6"/>
    <property type="match status" value="1"/>
</dbReference>
<dbReference type="SUPFAM" id="SSF57302">
    <property type="entry name" value="Snake toxin-like"/>
    <property type="match status" value="1"/>
</dbReference>
<protein>
    <recommendedName>
        <fullName evidence="4">Secreted Ly-6/uPAR domain-containing protein 2</fullName>
    </recommendedName>
</protein>
<comment type="function">
    <text evidence="1">Binds and may modulate the functional properties of nicotinic and muscarinic acetylcholine receptors. May regulate keratinocytes proliferation, differentiation and apoptosis. In vitro moderately inhibits ACh-evoked currents of alpha-3:beta-2-containing nAChRs, strongly these of alpha-4:beta-2-containing nAChRs, modulates alpha-7-containing nAChRs, and inhibits nicotine-induced signaling probably implicating alpha-3:beta-4-containing nAChRs. Proposed to act on alpha-3:beta-2 and alpha-7 nAChRs in an orthosteric, and on mAChRs, such as CHRM1 and CHRM3, in an allosteric manner.</text>
</comment>
<comment type="subunit">
    <text evidence="1">Interacts with CHRNA3, CHRNA4, CHRNA5, CHRNA7, CHRNB2 and CHRNB4. Interacts with CHRM1 and CHRM3 probably in an allosteric manner (By similarity).</text>
</comment>
<comment type="subcellular location">
    <subcellularLocation>
        <location evidence="1">Secreted</location>
    </subcellularLocation>
</comment>
<sequence>MQFHTGLLLAAVLSLQLAAAQALWCHQCTGFGGCSRGSRCPRDSTHCVTTATRVLSNIENLPLVTKMCHTGCPDIPSLGLGPYVSIACCQTSLCNHD</sequence>
<reference key="1">
    <citation type="submission" date="2012-04" db="EMBL/GenBank/DDBJ databases">
        <title>De novo assembly of the rhesus macaque transcriptome from NextGen mRNA sequences.</title>
        <authorList>
            <person name="Pandey S."/>
            <person name="Maudhoo M.D."/>
            <person name="Guda C."/>
            <person name="Ferguson B."/>
            <person name="Fox H."/>
            <person name="Norgren R.B."/>
        </authorList>
    </citation>
    <scope>NUCLEOTIDE SEQUENCE [LARGE SCALE MRNA]</scope>
    <source>
        <tissue>Testis</tissue>
    </source>
</reference>
<gene>
    <name evidence="2" type="primary">SLURP2</name>
</gene>
<proteinExistence type="inferred from homology"/>
<evidence type="ECO:0000250" key="1">
    <source>
        <dbReference type="UniProtKB" id="P0DP57"/>
    </source>
</evidence>
<evidence type="ECO:0000250" key="2">
    <source>
        <dbReference type="UniProtKB" id="P0DP58"/>
    </source>
</evidence>
<evidence type="ECO:0000255" key="3"/>
<evidence type="ECO:0000305" key="4"/>
<accession>P0DP61</accession>
<accession>F6VEA7</accession>
<accession>F6VEB6</accession>
<accession>F6VED0</accession>
<accession>P61050</accession>
<name>SLUR2_MACMU</name>